<evidence type="ECO:0000255" key="1">
    <source>
        <dbReference type="HAMAP-Rule" id="MF_01503"/>
    </source>
</evidence>
<accession>B1KX65</accession>
<name>Y1897_CLOBM</name>
<dbReference type="EMBL" id="CP000962">
    <property type="protein sequence ID" value="ACA56462.1"/>
    <property type="molecule type" value="Genomic_DNA"/>
</dbReference>
<dbReference type="SMR" id="B1KX65"/>
<dbReference type="KEGG" id="cbl:CLK_1897"/>
<dbReference type="HOGENOM" id="CLU_165326_0_0_9"/>
<dbReference type="HAMAP" id="MF_01503">
    <property type="entry name" value="RemA"/>
    <property type="match status" value="1"/>
</dbReference>
<dbReference type="InterPro" id="IPR007169">
    <property type="entry name" value="RemA-like"/>
</dbReference>
<dbReference type="NCBIfam" id="NF046064">
    <property type="entry name" value="MtxBflmRegRemA"/>
    <property type="match status" value="1"/>
</dbReference>
<dbReference type="NCBIfam" id="NF003315">
    <property type="entry name" value="PRK04323.1"/>
    <property type="match status" value="1"/>
</dbReference>
<dbReference type="PANTHER" id="PTHR38449:SF1">
    <property type="entry name" value="REGULATORY PROTEIN SSL2874-RELATED"/>
    <property type="match status" value="1"/>
</dbReference>
<dbReference type="PANTHER" id="PTHR38449">
    <property type="entry name" value="REGULATORY PROTEIN TM_1690-RELATED"/>
    <property type="match status" value="1"/>
</dbReference>
<dbReference type="Pfam" id="PF04025">
    <property type="entry name" value="RemA-like"/>
    <property type="match status" value="1"/>
</dbReference>
<protein>
    <recommendedName>
        <fullName evidence="1">Putative regulatory protein CLK_1897</fullName>
    </recommendedName>
</protein>
<reference key="1">
    <citation type="journal article" date="2007" name="PLoS ONE">
        <title>Analysis of the neurotoxin complex genes in Clostridium botulinum A1-A4 and B1 strains: BoNT/A3, /Ba4 and /B1 clusters are located within plasmids.</title>
        <authorList>
            <person name="Smith T.J."/>
            <person name="Hill K.K."/>
            <person name="Foley B.T."/>
            <person name="Detter J.C."/>
            <person name="Munk A.C."/>
            <person name="Bruce D.C."/>
            <person name="Doggett N.A."/>
            <person name="Smith L.A."/>
            <person name="Marks J.D."/>
            <person name="Xie G."/>
            <person name="Brettin T.S."/>
        </authorList>
    </citation>
    <scope>NUCLEOTIDE SEQUENCE [LARGE SCALE GENOMIC DNA]</scope>
    <source>
        <strain>Loch Maree / Type A3</strain>
    </source>
</reference>
<comment type="similarity">
    <text evidence="1">Belongs to the RemA family.</text>
</comment>
<gene>
    <name type="ordered locus">CLK_1897</name>
</gene>
<feature type="chain" id="PRO_1000198217" description="Putative regulatory protein CLK_1897">
    <location>
        <begin position="1"/>
        <end position="91"/>
    </location>
</feature>
<organism>
    <name type="scientific">Clostridium botulinum (strain Loch Maree / Type A3)</name>
    <dbReference type="NCBI Taxonomy" id="498214"/>
    <lineage>
        <taxon>Bacteria</taxon>
        <taxon>Bacillati</taxon>
        <taxon>Bacillota</taxon>
        <taxon>Clostridia</taxon>
        <taxon>Eubacteriales</taxon>
        <taxon>Clostridiaceae</taxon>
        <taxon>Clostridium</taxon>
    </lineage>
</organism>
<proteinExistence type="inferred from homology"/>
<sequence>MAIKLINIGFGNIVSANRLVAIVSPESAPIKRIIQEARDRGMLIDATYGRRTRAVIITDSDHVILSAVQPETVAHRLASKAEEEDINEGEE</sequence>